<proteinExistence type="inferred from homology"/>
<protein>
    <recommendedName>
        <fullName evidence="1">tRNA pseudouridine synthase A</fullName>
        <ecNumber evidence="1">5.4.99.12</ecNumber>
    </recommendedName>
    <alternativeName>
        <fullName evidence="1">tRNA pseudouridine(38-40) synthase</fullName>
    </alternativeName>
    <alternativeName>
        <fullName evidence="1">tRNA pseudouridylate synthase I</fullName>
    </alternativeName>
    <alternativeName>
        <fullName evidence="1">tRNA-uridine isomerase I</fullName>
    </alternativeName>
</protein>
<organism>
    <name type="scientific">Methanococcus maripaludis (strain DSM 14266 / JCM 13030 / NBRC 101832 / S2 / LL)</name>
    <dbReference type="NCBI Taxonomy" id="267377"/>
    <lineage>
        <taxon>Archaea</taxon>
        <taxon>Methanobacteriati</taxon>
        <taxon>Methanobacteriota</taxon>
        <taxon>Methanomada group</taxon>
        <taxon>Methanococci</taxon>
        <taxon>Methanococcales</taxon>
        <taxon>Methanococcaceae</taxon>
        <taxon>Methanococcus</taxon>
    </lineage>
</organism>
<evidence type="ECO:0000255" key="1">
    <source>
        <dbReference type="HAMAP-Rule" id="MF_00171"/>
    </source>
</evidence>
<keyword id="KW-0413">Isomerase</keyword>
<keyword id="KW-1185">Reference proteome</keyword>
<keyword id="KW-0819">tRNA processing</keyword>
<accession>Q6M0K2</accession>
<gene>
    <name evidence="1" type="primary">truA</name>
    <name type="ordered locus">MMP0268</name>
</gene>
<sequence>MYIFKIAYDGKLSFQTQPHGETVCDKISNALLDCGYLDNKDRVPLYHGGRTDRGVAALGNYVVYEMDKKPVLPRVQSKLKWDGIWVLGCKKIEIFPEIEHRHYQYTLPNKNHDVELMKKASEKLIGTHYFQNLSKRDKTKVKDPVRTLYDIKISSNDYFITIDIFGESFLWNMVRRIIRLLSDIGKHKIENPEKFIELILSEDYKKGYPPSPAEGLILVDVKTNIDIDLDSYVIRNLKNSWEKSLNNSLMRLGLCKTVLSKT</sequence>
<comment type="function">
    <text evidence="1">Formation of pseudouridine at positions 38, 39 and 40 in the anticodon stem and loop of transfer RNAs.</text>
</comment>
<comment type="catalytic activity">
    <reaction evidence="1">
        <text>uridine(38/39/40) in tRNA = pseudouridine(38/39/40) in tRNA</text>
        <dbReference type="Rhea" id="RHEA:22376"/>
        <dbReference type="Rhea" id="RHEA-COMP:10085"/>
        <dbReference type="Rhea" id="RHEA-COMP:10087"/>
        <dbReference type="ChEBI" id="CHEBI:65314"/>
        <dbReference type="ChEBI" id="CHEBI:65315"/>
        <dbReference type="EC" id="5.4.99.12"/>
    </reaction>
</comment>
<comment type="similarity">
    <text evidence="1">Belongs to the tRNA pseudouridine synthase TruA family.</text>
</comment>
<name>TRUA_METMP</name>
<dbReference type="EC" id="5.4.99.12" evidence="1"/>
<dbReference type="EMBL" id="BX950229">
    <property type="protein sequence ID" value="CAF29824.1"/>
    <property type="molecule type" value="Genomic_DNA"/>
</dbReference>
<dbReference type="RefSeq" id="WP_011170212.1">
    <property type="nucleotide sequence ID" value="NC_005791.1"/>
</dbReference>
<dbReference type="SMR" id="Q6M0K2"/>
<dbReference type="STRING" id="267377.MMP0268"/>
<dbReference type="EnsemblBacteria" id="CAF29824">
    <property type="protein sequence ID" value="CAF29824"/>
    <property type="gene ID" value="MMP0268"/>
</dbReference>
<dbReference type="GeneID" id="2761461"/>
<dbReference type="KEGG" id="mmp:MMP0268"/>
<dbReference type="PATRIC" id="fig|267377.15.peg.271"/>
<dbReference type="eggNOG" id="arCOG04449">
    <property type="taxonomic scope" value="Archaea"/>
</dbReference>
<dbReference type="HOGENOM" id="CLU_014673_4_2_2"/>
<dbReference type="OrthoDB" id="25720at2157"/>
<dbReference type="Proteomes" id="UP000000590">
    <property type="component" value="Chromosome"/>
</dbReference>
<dbReference type="GO" id="GO:0003723">
    <property type="term" value="F:RNA binding"/>
    <property type="evidence" value="ECO:0007669"/>
    <property type="project" value="InterPro"/>
</dbReference>
<dbReference type="GO" id="GO:0160147">
    <property type="term" value="F:tRNA pseudouridine(38-40) synthase activity"/>
    <property type="evidence" value="ECO:0007669"/>
    <property type="project" value="UniProtKB-EC"/>
</dbReference>
<dbReference type="GO" id="GO:0031119">
    <property type="term" value="P:tRNA pseudouridine synthesis"/>
    <property type="evidence" value="ECO:0007669"/>
    <property type="project" value="UniProtKB-UniRule"/>
</dbReference>
<dbReference type="CDD" id="cd02866">
    <property type="entry name" value="PseudoU_synth_TruA_Archea"/>
    <property type="match status" value="1"/>
</dbReference>
<dbReference type="Gene3D" id="3.30.70.660">
    <property type="entry name" value="Pseudouridine synthase I, catalytic domain, C-terminal subdomain"/>
    <property type="match status" value="1"/>
</dbReference>
<dbReference type="Gene3D" id="3.30.70.580">
    <property type="entry name" value="Pseudouridine synthase I, catalytic domain, N-terminal subdomain"/>
    <property type="match status" value="1"/>
</dbReference>
<dbReference type="HAMAP" id="MF_00171">
    <property type="entry name" value="TruA"/>
    <property type="match status" value="1"/>
</dbReference>
<dbReference type="InterPro" id="IPR020103">
    <property type="entry name" value="PsdUridine_synth_cat_dom_sf"/>
</dbReference>
<dbReference type="InterPro" id="IPR001406">
    <property type="entry name" value="PsdUridine_synth_TruA"/>
</dbReference>
<dbReference type="InterPro" id="IPR020097">
    <property type="entry name" value="PsdUridine_synth_TruA_a/b_dom"/>
</dbReference>
<dbReference type="InterPro" id="IPR020095">
    <property type="entry name" value="PsdUridine_synth_TruA_C"/>
</dbReference>
<dbReference type="InterPro" id="IPR020094">
    <property type="entry name" value="TruA/RsuA/RluB/E/F_N"/>
</dbReference>
<dbReference type="NCBIfam" id="TIGR00071">
    <property type="entry name" value="hisT_truA"/>
    <property type="match status" value="1"/>
</dbReference>
<dbReference type="PANTHER" id="PTHR11142">
    <property type="entry name" value="PSEUDOURIDYLATE SYNTHASE"/>
    <property type="match status" value="1"/>
</dbReference>
<dbReference type="PANTHER" id="PTHR11142:SF0">
    <property type="entry name" value="TRNA PSEUDOURIDINE SYNTHASE-LIKE 1"/>
    <property type="match status" value="1"/>
</dbReference>
<dbReference type="Pfam" id="PF01416">
    <property type="entry name" value="PseudoU_synth_1"/>
    <property type="match status" value="1"/>
</dbReference>
<dbReference type="PIRSF" id="PIRSF001430">
    <property type="entry name" value="tRNA_psdUrid_synth"/>
    <property type="match status" value="1"/>
</dbReference>
<dbReference type="SUPFAM" id="SSF55120">
    <property type="entry name" value="Pseudouridine synthase"/>
    <property type="match status" value="1"/>
</dbReference>
<feature type="chain" id="PRO_0000057506" description="tRNA pseudouridine synthase A">
    <location>
        <begin position="1"/>
        <end position="262"/>
    </location>
</feature>
<feature type="active site" description="Nucleophile" evidence="1">
    <location>
        <position position="52"/>
    </location>
</feature>
<feature type="binding site" evidence="1">
    <location>
        <position position="103"/>
    </location>
    <ligand>
        <name>substrate</name>
    </ligand>
</feature>
<reference key="1">
    <citation type="journal article" date="2004" name="J. Bacteriol.">
        <title>Complete genome sequence of the genetically tractable hydrogenotrophic methanogen Methanococcus maripaludis.</title>
        <authorList>
            <person name="Hendrickson E.L."/>
            <person name="Kaul R."/>
            <person name="Zhou Y."/>
            <person name="Bovee D."/>
            <person name="Chapman P."/>
            <person name="Chung J."/>
            <person name="Conway de Macario E."/>
            <person name="Dodsworth J.A."/>
            <person name="Gillett W."/>
            <person name="Graham D.E."/>
            <person name="Hackett M."/>
            <person name="Haydock A.K."/>
            <person name="Kang A."/>
            <person name="Land M.L."/>
            <person name="Levy R."/>
            <person name="Lie T.J."/>
            <person name="Major T.A."/>
            <person name="Moore B.C."/>
            <person name="Porat I."/>
            <person name="Palmeiri A."/>
            <person name="Rouse G."/>
            <person name="Saenphimmachak C."/>
            <person name="Soell D."/>
            <person name="Van Dien S."/>
            <person name="Wang T."/>
            <person name="Whitman W.B."/>
            <person name="Xia Q."/>
            <person name="Zhang Y."/>
            <person name="Larimer F.W."/>
            <person name="Olson M.V."/>
            <person name="Leigh J.A."/>
        </authorList>
    </citation>
    <scope>NUCLEOTIDE SEQUENCE [LARGE SCALE GENOMIC DNA]</scope>
    <source>
        <strain>DSM 14266 / JCM 13030 / NBRC 101832 / S2 / LL</strain>
    </source>
</reference>